<proteinExistence type="evidence at transcript level"/>
<dbReference type="EMBL" id="X77514">
    <property type="protein sequence ID" value="CAA54650.1"/>
    <property type="molecule type" value="mRNA"/>
</dbReference>
<dbReference type="PIR" id="S41958">
    <property type="entry name" value="S41958"/>
</dbReference>
<dbReference type="SMR" id="Q24998"/>
<dbReference type="EnsemblMetazoa" id="XM_026900775.1">
    <property type="protein sequence ID" value="XP_026756576.1"/>
    <property type="gene ID" value="LOC113516357"/>
</dbReference>
<dbReference type="InParanoid" id="Q24998"/>
<dbReference type="Proteomes" id="UP000504614">
    <property type="component" value="Unplaced"/>
</dbReference>
<dbReference type="GO" id="GO:0042302">
    <property type="term" value="F:structural constituent of cuticle"/>
    <property type="evidence" value="ECO:0007669"/>
    <property type="project" value="UniProtKB-KW"/>
</dbReference>
<evidence type="ECO:0000255" key="1"/>
<evidence type="ECO:0000256" key="2">
    <source>
        <dbReference type="SAM" id="MobiDB-lite"/>
    </source>
</evidence>
<protein>
    <recommendedName>
        <fullName>Pupal cuticle protein PCP52</fullName>
    </recommendedName>
    <alternativeName>
        <fullName>GMPCP52</fullName>
    </alternativeName>
</protein>
<comment type="function">
    <text>Component of the cuticle of the pupa of Galleria mellonella.</text>
</comment>
<comment type="developmental stage">
    <text>Maximal expression during the first day after pupal ecdysis.</text>
</comment>
<name>CUP52_GALME</name>
<sequence>MRVLILSAFIACATAAPSAPVFGTLTPLTVPYIANIPTISPGDIQAAAIDAKVKVEDALRAAADRNQELLEQAIENQNEKVIEVNDLLKEKSQEAFWSTEDTKWQALTALQTAEAKIDGTLASNADLLGKAVLNGVVVSPVVSRIYSNVIQGVAAADCETPVLKAAEAPEGNKDEGNKDSVQVESSATESESDKAAAGFVRNLEAAQAAAQAQLLSETSAPTADTRAVIAASSEASAAAAPAASLSEASAQSASETGVSAASLSQSPVATPLSAAPLAPLPSSSVPLAGVPASAIAAAPLTAASLIASPLTLPTLNLEQQWVTGPVFVQPGLKAISPISLQTPFVPTLLKTPC</sequence>
<reference key="1">
    <citation type="journal article" date="1995" name="Insect Biochem. Mol. Biol.">
        <title>Expression cloning and characterization of a pupal cuticle protein cDNA of Galleria mellonella L.</title>
        <authorList>
            <person name="Kollberg U."/>
            <person name="Obermaier B."/>
            <person name="Hirsch H."/>
            <person name="Kelber G."/>
            <person name="Wolbert P."/>
        </authorList>
    </citation>
    <scope>NUCLEOTIDE SEQUENCE [MRNA]</scope>
    <source>
        <tissue>Epidermis</tissue>
    </source>
</reference>
<feature type="signal peptide" evidence="1">
    <location>
        <begin position="1"/>
        <end position="15"/>
    </location>
</feature>
<feature type="chain" id="PRO_0000006418" description="Pupal cuticle protein PCP52">
    <location>
        <begin position="16"/>
        <end position="353"/>
    </location>
</feature>
<feature type="region of interest" description="Disordered" evidence="2">
    <location>
        <begin position="166"/>
        <end position="195"/>
    </location>
</feature>
<feature type="compositionally biased region" description="Polar residues" evidence="2">
    <location>
        <begin position="179"/>
        <end position="189"/>
    </location>
</feature>
<gene>
    <name type="primary">PCP52</name>
</gene>
<accession>Q24998</accession>
<keyword id="KW-0193">Cuticle</keyword>
<keyword id="KW-1185">Reference proteome</keyword>
<keyword id="KW-0732">Signal</keyword>
<organism>
    <name type="scientific">Galleria mellonella</name>
    <name type="common">Greater wax moth</name>
    <dbReference type="NCBI Taxonomy" id="7137"/>
    <lineage>
        <taxon>Eukaryota</taxon>
        <taxon>Metazoa</taxon>
        <taxon>Ecdysozoa</taxon>
        <taxon>Arthropoda</taxon>
        <taxon>Hexapoda</taxon>
        <taxon>Insecta</taxon>
        <taxon>Pterygota</taxon>
        <taxon>Neoptera</taxon>
        <taxon>Endopterygota</taxon>
        <taxon>Lepidoptera</taxon>
        <taxon>Glossata</taxon>
        <taxon>Ditrysia</taxon>
        <taxon>Pyraloidea</taxon>
        <taxon>Pyralidae</taxon>
        <taxon>Galleriinae</taxon>
        <taxon>Galleria</taxon>
    </lineage>
</organism>